<evidence type="ECO:0000255" key="1">
    <source>
        <dbReference type="HAMAP-Rule" id="MF_00207"/>
    </source>
</evidence>
<protein>
    <recommendedName>
        <fullName evidence="1">Probable manganese-dependent inorganic pyrophosphatase</fullName>
        <ecNumber evidence="1">3.6.1.1</ecNumber>
    </recommendedName>
    <alternativeName>
        <fullName evidence="1">Pyrophosphate phospho-hydrolase</fullName>
        <shortName evidence="1">PPase</shortName>
    </alternativeName>
</protein>
<organism>
    <name type="scientific">Streptococcus pneumoniae serotype 19F (strain G54)</name>
    <dbReference type="NCBI Taxonomy" id="512566"/>
    <lineage>
        <taxon>Bacteria</taxon>
        <taxon>Bacillati</taxon>
        <taxon>Bacillota</taxon>
        <taxon>Bacilli</taxon>
        <taxon>Lactobacillales</taxon>
        <taxon>Streptococcaceae</taxon>
        <taxon>Streptococcus</taxon>
    </lineage>
</organism>
<sequence>MSKILVFGHQNPDSDAIGSSVAFAYLAKEAYGLDTEAVALGTPNEETAFVLNYFGVEAPRVITSAKAEGAEQVILTDHNEFQQSVSDIAEVEVYGVVDHHRVANFETASPLYMRLEPVGSASSIVYRMFKEHGVAVPKEIAGLMLSGLISDTLLLKSPTTHPTDKIIAPELAELAGVNLEEYGLAMLKAGTNLASKSAEELIDIDAKTFELNGNNVRVAQVNTVDIAEVLERQAEIEAAMQAANESNGYSDFVLMITDIVNSNSEILALGANMDKVEAAFNFKLENNHAFLAGAVSRKKQVVPQLTESFNA</sequence>
<reference key="1">
    <citation type="journal article" date="2001" name="Microb. Drug Resist.">
        <title>Annotated draft genomic sequence from a Streptococcus pneumoniae type 19F clinical isolate.</title>
        <authorList>
            <person name="Dopazo J."/>
            <person name="Mendoza A."/>
            <person name="Herrero J."/>
            <person name="Caldara F."/>
            <person name="Humbert Y."/>
            <person name="Friedli L."/>
            <person name="Guerrier M."/>
            <person name="Grand-Schenk E."/>
            <person name="Gandin C."/>
            <person name="de Francesco M."/>
            <person name="Polissi A."/>
            <person name="Buell G."/>
            <person name="Feger G."/>
            <person name="Garcia E."/>
            <person name="Peitsch M."/>
            <person name="Garcia-Bustos J.F."/>
        </authorList>
    </citation>
    <scope>NUCLEOTIDE SEQUENCE [LARGE SCALE GENOMIC DNA]</scope>
    <source>
        <strain>G54</strain>
    </source>
</reference>
<reference key="2">
    <citation type="submission" date="2008-03" db="EMBL/GenBank/DDBJ databases">
        <title>Pneumococcal beta glucoside metabolism investigated by whole genome comparison.</title>
        <authorList>
            <person name="Mulas L."/>
            <person name="Trappetti C."/>
            <person name="Hakenbeck R."/>
            <person name="Iannelli F."/>
            <person name="Pozzi G."/>
            <person name="Davidsen T.M."/>
            <person name="Tettelin H."/>
            <person name="Oggioni M."/>
        </authorList>
    </citation>
    <scope>NUCLEOTIDE SEQUENCE [LARGE SCALE GENOMIC DNA]</scope>
    <source>
        <strain>G54</strain>
    </source>
</reference>
<comment type="catalytic activity">
    <reaction evidence="1">
        <text>diphosphate + H2O = 2 phosphate + H(+)</text>
        <dbReference type="Rhea" id="RHEA:24576"/>
        <dbReference type="ChEBI" id="CHEBI:15377"/>
        <dbReference type="ChEBI" id="CHEBI:15378"/>
        <dbReference type="ChEBI" id="CHEBI:33019"/>
        <dbReference type="ChEBI" id="CHEBI:43474"/>
        <dbReference type="EC" id="3.6.1.1"/>
    </reaction>
</comment>
<comment type="cofactor">
    <cofactor evidence="1">
        <name>Mn(2+)</name>
        <dbReference type="ChEBI" id="CHEBI:29035"/>
    </cofactor>
    <text evidence="1">Binds 2 manganese ions per subunit.</text>
</comment>
<comment type="subcellular location">
    <subcellularLocation>
        <location evidence="1">Cytoplasm</location>
    </subcellularLocation>
</comment>
<comment type="similarity">
    <text evidence="1">Belongs to the PPase class C family.</text>
</comment>
<proteinExistence type="inferred from homology"/>
<name>PPAC_STRP4</name>
<accession>B5E699</accession>
<dbReference type="EC" id="3.6.1.1" evidence="1"/>
<dbReference type="EMBL" id="CP001015">
    <property type="protein sequence ID" value="ACF55314.1"/>
    <property type="molecule type" value="Genomic_DNA"/>
</dbReference>
<dbReference type="SMR" id="B5E699"/>
<dbReference type="KEGG" id="spx:SPG_1460"/>
<dbReference type="HOGENOM" id="CLU_025243_0_1_9"/>
<dbReference type="GO" id="GO:0005737">
    <property type="term" value="C:cytoplasm"/>
    <property type="evidence" value="ECO:0007669"/>
    <property type="project" value="UniProtKB-SubCell"/>
</dbReference>
<dbReference type="GO" id="GO:0004427">
    <property type="term" value="F:inorganic diphosphate phosphatase activity"/>
    <property type="evidence" value="ECO:0007669"/>
    <property type="project" value="UniProtKB-UniRule"/>
</dbReference>
<dbReference type="GO" id="GO:0030145">
    <property type="term" value="F:manganese ion binding"/>
    <property type="evidence" value="ECO:0007669"/>
    <property type="project" value="UniProtKB-UniRule"/>
</dbReference>
<dbReference type="FunFam" id="3.10.310.20:FF:000001">
    <property type="entry name" value="Probable manganese-dependent inorganic pyrophosphatase"/>
    <property type="match status" value="1"/>
</dbReference>
<dbReference type="FunFam" id="3.90.1640.10:FF:000001">
    <property type="entry name" value="Probable manganese-dependent inorganic pyrophosphatase"/>
    <property type="match status" value="1"/>
</dbReference>
<dbReference type="Gene3D" id="3.10.310.20">
    <property type="entry name" value="DHHA2 domain"/>
    <property type="match status" value="1"/>
</dbReference>
<dbReference type="Gene3D" id="3.90.1640.10">
    <property type="entry name" value="inorganic pyrophosphatase (n-terminal core)"/>
    <property type="match status" value="1"/>
</dbReference>
<dbReference type="HAMAP" id="MF_00207">
    <property type="entry name" value="PPase_C"/>
    <property type="match status" value="1"/>
</dbReference>
<dbReference type="InterPro" id="IPR001667">
    <property type="entry name" value="DDH_dom"/>
</dbReference>
<dbReference type="InterPro" id="IPR038763">
    <property type="entry name" value="DHH_sf"/>
</dbReference>
<dbReference type="InterPro" id="IPR004097">
    <property type="entry name" value="DHHA2"/>
</dbReference>
<dbReference type="InterPro" id="IPR038222">
    <property type="entry name" value="DHHA2_dom_sf"/>
</dbReference>
<dbReference type="InterPro" id="IPR022934">
    <property type="entry name" value="Mn-dep_inorganic_PyrPase"/>
</dbReference>
<dbReference type="InterPro" id="IPR051319">
    <property type="entry name" value="Oligoribo/pAp-PDE_c-di-AMP_PDE"/>
</dbReference>
<dbReference type="NCBIfam" id="NF003877">
    <property type="entry name" value="PRK05427.1"/>
    <property type="match status" value="1"/>
</dbReference>
<dbReference type="PANTHER" id="PTHR47618">
    <property type="entry name" value="BIFUNCTIONAL OLIGORIBONUCLEASE AND PAP PHOSPHATASE NRNA"/>
    <property type="match status" value="1"/>
</dbReference>
<dbReference type="PANTHER" id="PTHR47618:SF1">
    <property type="entry name" value="BIFUNCTIONAL OLIGORIBONUCLEASE AND PAP PHOSPHATASE NRNA"/>
    <property type="match status" value="1"/>
</dbReference>
<dbReference type="Pfam" id="PF01368">
    <property type="entry name" value="DHH"/>
    <property type="match status" value="1"/>
</dbReference>
<dbReference type="Pfam" id="PF02833">
    <property type="entry name" value="DHHA2"/>
    <property type="match status" value="1"/>
</dbReference>
<dbReference type="SMART" id="SM01131">
    <property type="entry name" value="DHHA2"/>
    <property type="match status" value="1"/>
</dbReference>
<dbReference type="SUPFAM" id="SSF64182">
    <property type="entry name" value="DHH phosphoesterases"/>
    <property type="match status" value="1"/>
</dbReference>
<feature type="chain" id="PRO_1000099652" description="Probable manganese-dependent inorganic pyrophosphatase">
    <location>
        <begin position="1"/>
        <end position="311"/>
    </location>
</feature>
<feature type="binding site" evidence="1">
    <location>
        <position position="9"/>
    </location>
    <ligand>
        <name>Mn(2+)</name>
        <dbReference type="ChEBI" id="CHEBI:29035"/>
        <label>1</label>
    </ligand>
</feature>
<feature type="binding site" evidence="1">
    <location>
        <position position="13"/>
    </location>
    <ligand>
        <name>Mn(2+)</name>
        <dbReference type="ChEBI" id="CHEBI:29035"/>
        <label>1</label>
    </ligand>
</feature>
<feature type="binding site" evidence="1">
    <location>
        <position position="15"/>
    </location>
    <ligand>
        <name>Mn(2+)</name>
        <dbReference type="ChEBI" id="CHEBI:29035"/>
        <label>2</label>
    </ligand>
</feature>
<feature type="binding site" evidence="1">
    <location>
        <position position="77"/>
    </location>
    <ligand>
        <name>Mn(2+)</name>
        <dbReference type="ChEBI" id="CHEBI:29035"/>
        <label>1</label>
    </ligand>
</feature>
<feature type="binding site" evidence="1">
    <location>
        <position position="77"/>
    </location>
    <ligand>
        <name>Mn(2+)</name>
        <dbReference type="ChEBI" id="CHEBI:29035"/>
        <label>2</label>
    </ligand>
</feature>
<feature type="binding site" evidence="1">
    <location>
        <position position="99"/>
    </location>
    <ligand>
        <name>Mn(2+)</name>
        <dbReference type="ChEBI" id="CHEBI:29035"/>
        <label>2</label>
    </ligand>
</feature>
<feature type="binding site" evidence="1">
    <location>
        <position position="151"/>
    </location>
    <ligand>
        <name>Mn(2+)</name>
        <dbReference type="ChEBI" id="CHEBI:29035"/>
        <label>2</label>
    </ligand>
</feature>
<gene>
    <name evidence="1" type="primary">ppaC</name>
    <name type="ordered locus">SPG_1460</name>
</gene>
<keyword id="KW-0963">Cytoplasm</keyword>
<keyword id="KW-0378">Hydrolase</keyword>
<keyword id="KW-0464">Manganese</keyword>
<keyword id="KW-0479">Metal-binding</keyword>